<keyword id="KW-1005">Bacterial flagellum biogenesis</keyword>
<keyword id="KW-1185">Reference proteome</keyword>
<keyword id="KW-0678">Repressor</keyword>
<keyword id="KW-0694">RNA-binding</keyword>
<gene>
    <name evidence="1" type="primary">flbT</name>
    <name type="ordered locus">RHE_CH00683</name>
</gene>
<dbReference type="EMBL" id="CP000133">
    <property type="protein sequence ID" value="ABC89499.1"/>
    <property type="molecule type" value="Genomic_DNA"/>
</dbReference>
<dbReference type="RefSeq" id="WP_011424047.1">
    <property type="nucleotide sequence ID" value="NC_007761.1"/>
</dbReference>
<dbReference type="SMR" id="Q2KCD7"/>
<dbReference type="KEGG" id="ret:RHE_CH00683"/>
<dbReference type="eggNOG" id="COG5443">
    <property type="taxonomic scope" value="Bacteria"/>
</dbReference>
<dbReference type="HOGENOM" id="CLU_130913_1_0_5"/>
<dbReference type="OrthoDB" id="7932924at2"/>
<dbReference type="Proteomes" id="UP000001936">
    <property type="component" value="Chromosome"/>
</dbReference>
<dbReference type="GO" id="GO:0048027">
    <property type="term" value="F:mRNA 5'-UTR binding"/>
    <property type="evidence" value="ECO:0007669"/>
    <property type="project" value="UniProtKB-UniRule"/>
</dbReference>
<dbReference type="GO" id="GO:0044781">
    <property type="term" value="P:bacterial-type flagellum organization"/>
    <property type="evidence" value="ECO:0007669"/>
    <property type="project" value="UniProtKB-KW"/>
</dbReference>
<dbReference type="GO" id="GO:0006402">
    <property type="term" value="P:mRNA catabolic process"/>
    <property type="evidence" value="ECO:0007669"/>
    <property type="project" value="InterPro"/>
</dbReference>
<dbReference type="GO" id="GO:1902209">
    <property type="term" value="P:negative regulation of bacterial-type flagellum assembly"/>
    <property type="evidence" value="ECO:0007669"/>
    <property type="project" value="UniProtKB-UniRule"/>
</dbReference>
<dbReference type="HAMAP" id="MF_00783">
    <property type="entry name" value="FlbT"/>
    <property type="match status" value="1"/>
</dbReference>
<dbReference type="InterPro" id="IPR009967">
    <property type="entry name" value="Flagellum_FlbT"/>
</dbReference>
<dbReference type="NCBIfam" id="NF001995">
    <property type="entry name" value="PRK00794.1-1"/>
    <property type="match status" value="1"/>
</dbReference>
<dbReference type="Pfam" id="PF07378">
    <property type="entry name" value="FlbT"/>
    <property type="match status" value="1"/>
</dbReference>
<dbReference type="PIRSF" id="PIRSF009533">
    <property type="entry name" value="FlbT"/>
    <property type="match status" value="1"/>
</dbReference>
<reference key="1">
    <citation type="journal article" date="2006" name="Proc. Natl. Acad. Sci. U.S.A.">
        <title>The partitioned Rhizobium etli genome: genetic and metabolic redundancy in seven interacting replicons.</title>
        <authorList>
            <person name="Gonzalez V."/>
            <person name="Santamaria R.I."/>
            <person name="Bustos P."/>
            <person name="Hernandez-Gonzalez I."/>
            <person name="Medrano-Soto A."/>
            <person name="Moreno-Hagelsieb G."/>
            <person name="Janga S.C."/>
            <person name="Ramirez M.A."/>
            <person name="Jimenez-Jacinto V."/>
            <person name="Collado-Vides J."/>
            <person name="Davila G."/>
        </authorList>
    </citation>
    <scope>NUCLEOTIDE SEQUENCE [LARGE SCALE GENOMIC DNA]</scope>
    <source>
        <strain>ATCC 51251 / DSM 11541 / JCM 21823 / NBRC 15573 / CFN 42</strain>
    </source>
</reference>
<evidence type="ECO:0000255" key="1">
    <source>
        <dbReference type="HAMAP-Rule" id="MF_00783"/>
    </source>
</evidence>
<comment type="function">
    <text evidence="1">Has a post-transcriptional repressor function in flagellum biogenesis. Associates with the 5'-UTR of fljK mRNA and promotes its degradation.</text>
</comment>
<comment type="similarity">
    <text evidence="1">Belongs to the FlbT family.</text>
</comment>
<feature type="chain" id="PRO_1000046833" description="Probable flagellum biosynthesis repressor protein FlbT">
    <location>
        <begin position="1"/>
        <end position="149"/>
    </location>
</feature>
<proteinExistence type="inferred from homology"/>
<protein>
    <recommendedName>
        <fullName evidence="1">Probable flagellum biosynthesis repressor protein FlbT</fullName>
    </recommendedName>
</protein>
<sequence>MKSTLRISLKAGERIFINGAVLRVDRKVALEFLNDVTFLLENHVLQPEGATTPLRQLYFIAQMILINPEGKDHSTAMFRKSITMLLTCFKNEEILAELKRIDALVSTGRAFDALKAIRGLYAIEDNILNNQELPPTMVEQIRREIAPWR</sequence>
<accession>Q2KCD7</accession>
<organism>
    <name type="scientific">Rhizobium etli (strain ATCC 51251 / DSM 11541 / JCM 21823 / NBRC 15573 / CFN 42)</name>
    <dbReference type="NCBI Taxonomy" id="347834"/>
    <lineage>
        <taxon>Bacteria</taxon>
        <taxon>Pseudomonadati</taxon>
        <taxon>Pseudomonadota</taxon>
        <taxon>Alphaproteobacteria</taxon>
        <taxon>Hyphomicrobiales</taxon>
        <taxon>Rhizobiaceae</taxon>
        <taxon>Rhizobium/Agrobacterium group</taxon>
        <taxon>Rhizobium</taxon>
    </lineage>
</organism>
<name>FLBT_RHIEC</name>